<dbReference type="EC" id="2.1.3.2" evidence="1"/>
<dbReference type="EMBL" id="CP000153">
    <property type="protein sequence ID" value="ABB43742.1"/>
    <property type="molecule type" value="Genomic_DNA"/>
</dbReference>
<dbReference type="RefSeq" id="WP_011372096.1">
    <property type="nucleotide sequence ID" value="NC_007575.1"/>
</dbReference>
<dbReference type="SMR" id="Q30TD9"/>
<dbReference type="STRING" id="326298.Suden_0461"/>
<dbReference type="KEGG" id="tdn:Suden_0461"/>
<dbReference type="eggNOG" id="COG0540">
    <property type="taxonomic scope" value="Bacteria"/>
</dbReference>
<dbReference type="HOGENOM" id="CLU_043846_2_0_7"/>
<dbReference type="OrthoDB" id="9774690at2"/>
<dbReference type="UniPathway" id="UPA00070">
    <property type="reaction ID" value="UER00116"/>
</dbReference>
<dbReference type="Proteomes" id="UP000002714">
    <property type="component" value="Chromosome"/>
</dbReference>
<dbReference type="GO" id="GO:0005829">
    <property type="term" value="C:cytosol"/>
    <property type="evidence" value="ECO:0007669"/>
    <property type="project" value="TreeGrafter"/>
</dbReference>
<dbReference type="GO" id="GO:0016597">
    <property type="term" value="F:amino acid binding"/>
    <property type="evidence" value="ECO:0007669"/>
    <property type="project" value="InterPro"/>
</dbReference>
<dbReference type="GO" id="GO:0004070">
    <property type="term" value="F:aspartate carbamoyltransferase activity"/>
    <property type="evidence" value="ECO:0007669"/>
    <property type="project" value="UniProtKB-UniRule"/>
</dbReference>
<dbReference type="GO" id="GO:0006207">
    <property type="term" value="P:'de novo' pyrimidine nucleobase biosynthetic process"/>
    <property type="evidence" value="ECO:0007669"/>
    <property type="project" value="InterPro"/>
</dbReference>
<dbReference type="GO" id="GO:0044205">
    <property type="term" value="P:'de novo' UMP biosynthetic process"/>
    <property type="evidence" value="ECO:0007669"/>
    <property type="project" value="UniProtKB-UniRule"/>
</dbReference>
<dbReference type="GO" id="GO:0006520">
    <property type="term" value="P:amino acid metabolic process"/>
    <property type="evidence" value="ECO:0007669"/>
    <property type="project" value="InterPro"/>
</dbReference>
<dbReference type="Gene3D" id="3.40.50.1370">
    <property type="entry name" value="Aspartate/ornithine carbamoyltransferase"/>
    <property type="match status" value="2"/>
</dbReference>
<dbReference type="HAMAP" id="MF_00001">
    <property type="entry name" value="Asp_carb_tr"/>
    <property type="match status" value="1"/>
</dbReference>
<dbReference type="InterPro" id="IPR006132">
    <property type="entry name" value="Asp/Orn_carbamoyltranf_P-bd"/>
</dbReference>
<dbReference type="InterPro" id="IPR006130">
    <property type="entry name" value="Asp/Orn_carbamoylTrfase"/>
</dbReference>
<dbReference type="InterPro" id="IPR036901">
    <property type="entry name" value="Asp/Orn_carbamoylTrfase_sf"/>
</dbReference>
<dbReference type="InterPro" id="IPR002082">
    <property type="entry name" value="Asp_carbamoyltransf"/>
</dbReference>
<dbReference type="InterPro" id="IPR006131">
    <property type="entry name" value="Asp_carbamoyltransf_Asp/Orn-bd"/>
</dbReference>
<dbReference type="NCBIfam" id="TIGR00670">
    <property type="entry name" value="asp_carb_tr"/>
    <property type="match status" value="1"/>
</dbReference>
<dbReference type="NCBIfam" id="NF002032">
    <property type="entry name" value="PRK00856.1"/>
    <property type="match status" value="1"/>
</dbReference>
<dbReference type="PANTHER" id="PTHR45753:SF6">
    <property type="entry name" value="ASPARTATE CARBAMOYLTRANSFERASE"/>
    <property type="match status" value="1"/>
</dbReference>
<dbReference type="PANTHER" id="PTHR45753">
    <property type="entry name" value="ORNITHINE CARBAMOYLTRANSFERASE, MITOCHONDRIAL"/>
    <property type="match status" value="1"/>
</dbReference>
<dbReference type="Pfam" id="PF00185">
    <property type="entry name" value="OTCace"/>
    <property type="match status" value="1"/>
</dbReference>
<dbReference type="Pfam" id="PF02729">
    <property type="entry name" value="OTCace_N"/>
    <property type="match status" value="1"/>
</dbReference>
<dbReference type="PRINTS" id="PR00100">
    <property type="entry name" value="AOTCASE"/>
</dbReference>
<dbReference type="PRINTS" id="PR00101">
    <property type="entry name" value="ATCASE"/>
</dbReference>
<dbReference type="SUPFAM" id="SSF53671">
    <property type="entry name" value="Aspartate/ornithine carbamoyltransferase"/>
    <property type="match status" value="1"/>
</dbReference>
<dbReference type="PROSITE" id="PS00097">
    <property type="entry name" value="CARBAMOYLTRANSFERASE"/>
    <property type="match status" value="1"/>
</dbReference>
<proteinExistence type="inferred from homology"/>
<keyword id="KW-0665">Pyrimidine biosynthesis</keyword>
<keyword id="KW-1185">Reference proteome</keyword>
<keyword id="KW-0808">Transferase</keyword>
<name>PYRB_SULDN</name>
<organism>
    <name type="scientific">Sulfurimonas denitrificans (strain ATCC 33889 / DSM 1251)</name>
    <name type="common">Thiomicrospira denitrificans (strain ATCC 33889 / DSM 1251)</name>
    <dbReference type="NCBI Taxonomy" id="326298"/>
    <lineage>
        <taxon>Bacteria</taxon>
        <taxon>Pseudomonadati</taxon>
        <taxon>Campylobacterota</taxon>
        <taxon>Epsilonproteobacteria</taxon>
        <taxon>Campylobacterales</taxon>
        <taxon>Sulfurimonadaceae</taxon>
        <taxon>Sulfurimonas</taxon>
    </lineage>
</organism>
<protein>
    <recommendedName>
        <fullName evidence="1">Aspartate carbamoyltransferase catalytic subunit</fullName>
        <ecNumber evidence="1">2.1.3.2</ecNumber>
    </recommendedName>
    <alternativeName>
        <fullName evidence="1">Aspartate transcarbamylase</fullName>
        <shortName evidence="1">ATCase</shortName>
    </alternativeName>
</protein>
<reference key="1">
    <citation type="journal article" date="2008" name="Appl. Environ. Microbiol.">
        <title>Genome of the epsilonproteobacterial chemolithoautotroph Sulfurimonas denitrificans.</title>
        <authorList>
            <person name="Sievert S.M."/>
            <person name="Scott K.M."/>
            <person name="Klotz M.G."/>
            <person name="Chain P.S.G."/>
            <person name="Hauser L.J."/>
            <person name="Hemp J."/>
            <person name="Huegler M."/>
            <person name="Land M."/>
            <person name="Lapidus A."/>
            <person name="Larimer F.W."/>
            <person name="Lucas S."/>
            <person name="Malfatti S.A."/>
            <person name="Meyer F."/>
            <person name="Paulsen I.T."/>
            <person name="Ren Q."/>
            <person name="Simon J."/>
            <person name="Bailey K."/>
            <person name="Diaz E."/>
            <person name="Fitzpatrick K.A."/>
            <person name="Glover B."/>
            <person name="Gwatney N."/>
            <person name="Korajkic A."/>
            <person name="Long A."/>
            <person name="Mobberley J.M."/>
            <person name="Pantry S.N."/>
            <person name="Pazder G."/>
            <person name="Peterson S."/>
            <person name="Quintanilla J.D."/>
            <person name="Sprinkle R."/>
            <person name="Stephens J."/>
            <person name="Thomas P."/>
            <person name="Vaughn R."/>
            <person name="Weber M.J."/>
            <person name="Wooten L.L."/>
        </authorList>
    </citation>
    <scope>NUCLEOTIDE SEQUENCE [LARGE SCALE GENOMIC DNA]</scope>
    <source>
        <strain>ATCC 33889 / DSM 1251</strain>
    </source>
</reference>
<comment type="function">
    <text evidence="1">Catalyzes the condensation of carbamoyl phosphate and aspartate to form carbamoyl aspartate and inorganic phosphate, the committed step in the de novo pyrimidine nucleotide biosynthesis pathway.</text>
</comment>
<comment type="catalytic activity">
    <reaction evidence="1">
        <text>carbamoyl phosphate + L-aspartate = N-carbamoyl-L-aspartate + phosphate + H(+)</text>
        <dbReference type="Rhea" id="RHEA:20013"/>
        <dbReference type="ChEBI" id="CHEBI:15378"/>
        <dbReference type="ChEBI" id="CHEBI:29991"/>
        <dbReference type="ChEBI" id="CHEBI:32814"/>
        <dbReference type="ChEBI" id="CHEBI:43474"/>
        <dbReference type="ChEBI" id="CHEBI:58228"/>
        <dbReference type="EC" id="2.1.3.2"/>
    </reaction>
</comment>
<comment type="pathway">
    <text evidence="1">Pyrimidine metabolism; UMP biosynthesis via de novo pathway; (S)-dihydroorotate from bicarbonate: step 2/3.</text>
</comment>
<comment type="subunit">
    <text evidence="1">Heterododecamer (2C3:3R2) of six catalytic PyrB chains organized as two trimers (C3), and six regulatory PyrI chains organized as three dimers (R2).</text>
</comment>
<comment type="similarity">
    <text evidence="1">Belongs to the aspartate/ornithine carbamoyltransferase superfamily. ATCase family.</text>
</comment>
<sequence>MKHLIRTDDFTTQEIESILADAELFSDGRFDRILRDKIIITLFFENSTRTRSSFEIAAKRLGAEIVHLDVANSSTKKGETLVDTAMNLDAMGPHAIIVRHQNSGVAKILSNHTKASIINAGDGAHAHPTQALLDLFTLKKHFKNLEGKKIAIVGDIKNSRVANSNIELLSRFKMEVILVAPPQFLPQSDLRTTHYLEDIIDEVDAIMSLRTQTERHSSQTYASLKDYASDFCITSEVVGDRDIIILHPGPVHRNIDICDALLADKRCKVLEQVANGVAIRMAVLKKLIYDV</sequence>
<evidence type="ECO:0000255" key="1">
    <source>
        <dbReference type="HAMAP-Rule" id="MF_00001"/>
    </source>
</evidence>
<feature type="chain" id="PRO_0000301636" description="Aspartate carbamoyltransferase catalytic subunit">
    <location>
        <begin position="1"/>
        <end position="291"/>
    </location>
</feature>
<feature type="binding site" evidence="1">
    <location>
        <position position="49"/>
    </location>
    <ligand>
        <name>carbamoyl phosphate</name>
        <dbReference type="ChEBI" id="CHEBI:58228"/>
    </ligand>
</feature>
<feature type="binding site" evidence="1">
    <location>
        <position position="50"/>
    </location>
    <ligand>
        <name>carbamoyl phosphate</name>
        <dbReference type="ChEBI" id="CHEBI:58228"/>
    </ligand>
</feature>
<feature type="binding site" evidence="1">
    <location>
        <position position="77"/>
    </location>
    <ligand>
        <name>L-aspartate</name>
        <dbReference type="ChEBI" id="CHEBI:29991"/>
    </ligand>
</feature>
<feature type="binding site" evidence="1">
    <location>
        <position position="99"/>
    </location>
    <ligand>
        <name>carbamoyl phosphate</name>
        <dbReference type="ChEBI" id="CHEBI:58228"/>
    </ligand>
</feature>
<feature type="binding site" evidence="1">
    <location>
        <position position="127"/>
    </location>
    <ligand>
        <name>carbamoyl phosphate</name>
        <dbReference type="ChEBI" id="CHEBI:58228"/>
    </ligand>
</feature>
<feature type="binding site" evidence="1">
    <location>
        <position position="130"/>
    </location>
    <ligand>
        <name>carbamoyl phosphate</name>
        <dbReference type="ChEBI" id="CHEBI:58228"/>
    </ligand>
</feature>
<feature type="binding site" evidence="1">
    <location>
        <position position="160"/>
    </location>
    <ligand>
        <name>L-aspartate</name>
        <dbReference type="ChEBI" id="CHEBI:29991"/>
    </ligand>
</feature>
<feature type="binding site" evidence="1">
    <location>
        <position position="210"/>
    </location>
    <ligand>
        <name>L-aspartate</name>
        <dbReference type="ChEBI" id="CHEBI:29991"/>
    </ligand>
</feature>
<feature type="binding site" evidence="1">
    <location>
        <position position="249"/>
    </location>
    <ligand>
        <name>carbamoyl phosphate</name>
        <dbReference type="ChEBI" id="CHEBI:58228"/>
    </ligand>
</feature>
<feature type="binding site" evidence="1">
    <location>
        <position position="250"/>
    </location>
    <ligand>
        <name>carbamoyl phosphate</name>
        <dbReference type="ChEBI" id="CHEBI:58228"/>
    </ligand>
</feature>
<gene>
    <name evidence="1" type="primary">pyrB</name>
    <name type="ordered locus">Suden_0461</name>
</gene>
<accession>Q30TD9</accession>